<keyword id="KW-0520">NAD</keyword>
<keyword id="KW-0521">NADP</keyword>
<keyword id="KW-0560">Oxidoreductase</keyword>
<keyword id="KW-0662">Pyridine nucleotide biosynthesis</keyword>
<keyword id="KW-1185">Reference proteome</keyword>
<protein>
    <recommendedName>
        <fullName evidence="1">L-aspartate dehydrogenase</fullName>
        <ecNumber evidence="1">1.4.1.21</ecNumber>
    </recommendedName>
</protein>
<name>ASPD_RUEPO</name>
<evidence type="ECO:0000255" key="1">
    <source>
        <dbReference type="HAMAP-Rule" id="MF_01265"/>
    </source>
</evidence>
<accession>Q5LPG8</accession>
<dbReference type="EC" id="1.4.1.21" evidence="1"/>
<dbReference type="EMBL" id="CP000031">
    <property type="protein sequence ID" value="AAV96121.1"/>
    <property type="molecule type" value="Genomic_DNA"/>
</dbReference>
<dbReference type="RefSeq" id="WP_011048580.1">
    <property type="nucleotide sequence ID" value="NC_003911.12"/>
</dbReference>
<dbReference type="SMR" id="Q5LPG8"/>
<dbReference type="STRING" id="246200.SPO2880"/>
<dbReference type="PaxDb" id="246200-SPO2880"/>
<dbReference type="KEGG" id="sil:SPO2880"/>
<dbReference type="eggNOG" id="COG1712">
    <property type="taxonomic scope" value="Bacteria"/>
</dbReference>
<dbReference type="HOGENOM" id="CLU_089550_0_0_5"/>
<dbReference type="OrthoDB" id="8456681at2"/>
<dbReference type="UniPathway" id="UPA00253">
    <property type="reaction ID" value="UER00456"/>
</dbReference>
<dbReference type="Proteomes" id="UP000001023">
    <property type="component" value="Chromosome"/>
</dbReference>
<dbReference type="GO" id="GO:0033735">
    <property type="term" value="F:aspartate dehydrogenase activity"/>
    <property type="evidence" value="ECO:0007669"/>
    <property type="project" value="UniProtKB-EC"/>
</dbReference>
<dbReference type="GO" id="GO:0051287">
    <property type="term" value="F:NAD binding"/>
    <property type="evidence" value="ECO:0007669"/>
    <property type="project" value="UniProtKB-UniRule"/>
</dbReference>
<dbReference type="GO" id="GO:0050661">
    <property type="term" value="F:NADP binding"/>
    <property type="evidence" value="ECO:0007669"/>
    <property type="project" value="UniProtKB-UniRule"/>
</dbReference>
<dbReference type="GO" id="GO:0016639">
    <property type="term" value="F:oxidoreductase activity, acting on the CH-NH2 group of donors, NAD or NADP as acceptor"/>
    <property type="evidence" value="ECO:0007669"/>
    <property type="project" value="UniProtKB-UniRule"/>
</dbReference>
<dbReference type="GO" id="GO:0009435">
    <property type="term" value="P:NAD biosynthetic process"/>
    <property type="evidence" value="ECO:0007669"/>
    <property type="project" value="UniProtKB-UniRule"/>
</dbReference>
<dbReference type="Gene3D" id="3.30.360.10">
    <property type="entry name" value="Dihydrodipicolinate Reductase, domain 2"/>
    <property type="match status" value="1"/>
</dbReference>
<dbReference type="Gene3D" id="3.40.50.720">
    <property type="entry name" value="NAD(P)-binding Rossmann-like Domain"/>
    <property type="match status" value="1"/>
</dbReference>
<dbReference type="HAMAP" id="MF_01265">
    <property type="entry name" value="NadX"/>
    <property type="match status" value="1"/>
</dbReference>
<dbReference type="InterPro" id="IPR005106">
    <property type="entry name" value="Asp/hSer_DH_NAD-bd"/>
</dbReference>
<dbReference type="InterPro" id="IPR002811">
    <property type="entry name" value="Asp_DH"/>
</dbReference>
<dbReference type="InterPro" id="IPR020626">
    <property type="entry name" value="Asp_DH_prok"/>
</dbReference>
<dbReference type="InterPro" id="IPR011182">
    <property type="entry name" value="L-Asp_DH"/>
</dbReference>
<dbReference type="InterPro" id="IPR036291">
    <property type="entry name" value="NAD(P)-bd_dom_sf"/>
</dbReference>
<dbReference type="NCBIfam" id="NF009827">
    <property type="entry name" value="PRK13303.1-2"/>
    <property type="match status" value="1"/>
</dbReference>
<dbReference type="NCBIfam" id="NF009828">
    <property type="entry name" value="PRK13303.1-3"/>
    <property type="match status" value="1"/>
</dbReference>
<dbReference type="PANTHER" id="PTHR31873:SF6">
    <property type="entry name" value="ASPARTATE DEHYDROGENASE DOMAIN-CONTAINING PROTEIN"/>
    <property type="match status" value="1"/>
</dbReference>
<dbReference type="PANTHER" id="PTHR31873">
    <property type="entry name" value="L-ASPARTATE DEHYDROGENASE-RELATED"/>
    <property type="match status" value="1"/>
</dbReference>
<dbReference type="Pfam" id="PF01958">
    <property type="entry name" value="Asp_DH_C"/>
    <property type="match status" value="1"/>
</dbReference>
<dbReference type="Pfam" id="PF03447">
    <property type="entry name" value="NAD_binding_3"/>
    <property type="match status" value="1"/>
</dbReference>
<dbReference type="PIRSF" id="PIRSF005227">
    <property type="entry name" value="Asp_dh_NAD_syn"/>
    <property type="match status" value="1"/>
</dbReference>
<dbReference type="SUPFAM" id="SSF55347">
    <property type="entry name" value="Glyceraldehyde-3-phosphate dehydrogenase-like, C-terminal domain"/>
    <property type="match status" value="1"/>
</dbReference>
<dbReference type="SUPFAM" id="SSF51735">
    <property type="entry name" value="NAD(P)-binding Rossmann-fold domains"/>
    <property type="match status" value="1"/>
</dbReference>
<feature type="chain" id="PRO_0000144892" description="L-aspartate dehydrogenase">
    <location>
        <begin position="1"/>
        <end position="275"/>
    </location>
</feature>
<feature type="active site" evidence="1">
    <location>
        <position position="226"/>
    </location>
</feature>
<feature type="binding site" evidence="1">
    <location>
        <position position="130"/>
    </location>
    <ligand>
        <name>NAD(+)</name>
        <dbReference type="ChEBI" id="CHEBI:57540"/>
    </ligand>
</feature>
<feature type="binding site" evidence="1">
    <location>
        <position position="196"/>
    </location>
    <ligand>
        <name>NAD(+)</name>
        <dbReference type="ChEBI" id="CHEBI:57540"/>
    </ligand>
</feature>
<gene>
    <name evidence="1" type="primary">nadX</name>
    <name type="ordered locus">SPO2880</name>
</gene>
<proteinExistence type="inferred from homology"/>
<reference key="1">
    <citation type="journal article" date="2004" name="Nature">
        <title>Genome sequence of Silicibacter pomeroyi reveals adaptations to the marine environment.</title>
        <authorList>
            <person name="Moran M.A."/>
            <person name="Buchan A."/>
            <person name="Gonzalez J.M."/>
            <person name="Heidelberg J.F."/>
            <person name="Whitman W.B."/>
            <person name="Kiene R.P."/>
            <person name="Henriksen J.R."/>
            <person name="King G.M."/>
            <person name="Belas R."/>
            <person name="Fuqua C."/>
            <person name="Brinkac L.M."/>
            <person name="Lewis M."/>
            <person name="Johri S."/>
            <person name="Weaver B."/>
            <person name="Pai G."/>
            <person name="Eisen J.A."/>
            <person name="Rahe E."/>
            <person name="Sheldon W.M."/>
            <person name="Ye W."/>
            <person name="Miller T.R."/>
            <person name="Carlton J."/>
            <person name="Rasko D.A."/>
            <person name="Paulsen I.T."/>
            <person name="Ren Q."/>
            <person name="Daugherty S.C."/>
            <person name="DeBoy R.T."/>
            <person name="Dodson R.J."/>
            <person name="Durkin A.S."/>
            <person name="Madupu R."/>
            <person name="Nelson W.C."/>
            <person name="Sullivan S.A."/>
            <person name="Rosovitz M.J."/>
            <person name="Haft D.H."/>
            <person name="Selengut J."/>
            <person name="Ward N."/>
        </authorList>
    </citation>
    <scope>NUCLEOTIDE SEQUENCE [LARGE SCALE GENOMIC DNA]</scope>
    <source>
        <strain>ATCC 700808 / DSM 15171 / DSS-3</strain>
    </source>
</reference>
<reference key="2">
    <citation type="journal article" date="2014" name="Stand. Genomic Sci.">
        <title>An updated genome annotation for the model marine bacterium Ruegeria pomeroyi DSS-3.</title>
        <authorList>
            <person name="Rivers A.R."/>
            <person name="Smith C.B."/>
            <person name="Moran M.A."/>
        </authorList>
    </citation>
    <scope>GENOME REANNOTATION</scope>
    <source>
        <strain>ATCC 700808 / DSM 15171 / DSS-3</strain>
    </source>
</reference>
<organism>
    <name type="scientific">Ruegeria pomeroyi (strain ATCC 700808 / DSM 15171 / DSS-3)</name>
    <name type="common">Silicibacter pomeroyi</name>
    <dbReference type="NCBI Taxonomy" id="246200"/>
    <lineage>
        <taxon>Bacteria</taxon>
        <taxon>Pseudomonadati</taxon>
        <taxon>Pseudomonadota</taxon>
        <taxon>Alphaproteobacteria</taxon>
        <taxon>Rhodobacterales</taxon>
        <taxon>Roseobacteraceae</taxon>
        <taxon>Ruegeria</taxon>
    </lineage>
</organism>
<comment type="function">
    <text evidence="1">Specifically catalyzes the NAD or NADP-dependent dehydrogenation of L-aspartate to iminoaspartate.</text>
</comment>
<comment type="catalytic activity">
    <reaction evidence="1">
        <text>L-aspartate + NADP(+) + H2O = oxaloacetate + NH4(+) + NADPH + H(+)</text>
        <dbReference type="Rhea" id="RHEA:11784"/>
        <dbReference type="ChEBI" id="CHEBI:15377"/>
        <dbReference type="ChEBI" id="CHEBI:15378"/>
        <dbReference type="ChEBI" id="CHEBI:16452"/>
        <dbReference type="ChEBI" id="CHEBI:28938"/>
        <dbReference type="ChEBI" id="CHEBI:29991"/>
        <dbReference type="ChEBI" id="CHEBI:57783"/>
        <dbReference type="ChEBI" id="CHEBI:58349"/>
        <dbReference type="EC" id="1.4.1.21"/>
    </reaction>
</comment>
<comment type="catalytic activity">
    <reaction evidence="1">
        <text>L-aspartate + NAD(+) + H2O = oxaloacetate + NH4(+) + NADH + H(+)</text>
        <dbReference type="Rhea" id="RHEA:11788"/>
        <dbReference type="ChEBI" id="CHEBI:15377"/>
        <dbReference type="ChEBI" id="CHEBI:15378"/>
        <dbReference type="ChEBI" id="CHEBI:16452"/>
        <dbReference type="ChEBI" id="CHEBI:28938"/>
        <dbReference type="ChEBI" id="CHEBI:29991"/>
        <dbReference type="ChEBI" id="CHEBI:57540"/>
        <dbReference type="ChEBI" id="CHEBI:57945"/>
        <dbReference type="EC" id="1.4.1.21"/>
    </reaction>
</comment>
<comment type="pathway">
    <text evidence="1">Cofactor biosynthesis; NAD(+) biosynthesis; iminoaspartate from L-aspartate (dehydrogenase route): step 1/1.</text>
</comment>
<comment type="miscellaneous">
    <text evidence="1">The iminoaspartate product is unstable in aqueous solution and can decompose to oxaloacetate and ammonia.</text>
</comment>
<comment type="similarity">
    <text evidence="1">Belongs to the L-aspartate dehydrogenase family.</text>
</comment>
<sequence length="275" mass="27808">MWKLWGSWPEGDRVRIALIGHGPIAAHVAAHLPVGVQLTGALCRPGRDDAARAALGVSVAQALEGLPQRPDLLVDCAGHSGLRAHGLTALGAGVEVLTVSVGALADAVFCAELEDAARAGGTRLCLASGAIGALDALAAAAMGTGLQVTYTGRKPPQGWRGSRAEKVLDLKALTGPVTHFTGTARAAAQAYPKNANVAAAVALAGAGLDATRAELIADPGAAANIHEIAAEGAFGRFRFQIEGLPLPGNPRSSALTALSLLAALRQRGAAIRPSF</sequence>